<comment type="function">
    <text evidence="1">Binds to the N-acetyl-9-O-acetylneuraminic acid residues on the cell surface, bringing about the attachment of the virus particle to the cell. Plays a major role in the determination of host range restriction and virulence. Class I viral fusion protein. Responsible for penetration of the virus into the cell cytoplasm by mediating the fusion of the membrane of the endocytosed virus particle with the endosomal membrane. Low pH in endosomes induce an irreversible conformational change in HEF2, releasing the fusion hydrophobic peptide. Several trimers are required to form a competent fusion pore. Displays a receptor-destroying activity which is a neuraminidate-O-acetyl esterase. This activity cleaves off any receptor on the cell surface, which would otherwise prevent virions release. These cleavages prevent self-aggregation and ensure the efficient spread of the progeny virus from cell to cell.</text>
</comment>
<comment type="catalytic activity">
    <reaction evidence="1">
        <text>N-acetyl-9-O-acetylneuraminate + H2O = N-acetylneuraminate + acetate + H(+)</text>
        <dbReference type="Rhea" id="RHEA:22600"/>
        <dbReference type="ChEBI" id="CHEBI:15377"/>
        <dbReference type="ChEBI" id="CHEBI:15378"/>
        <dbReference type="ChEBI" id="CHEBI:28999"/>
        <dbReference type="ChEBI" id="CHEBI:30089"/>
        <dbReference type="ChEBI" id="CHEBI:35418"/>
        <dbReference type="EC" id="3.1.1.53"/>
    </reaction>
</comment>
<comment type="catalytic activity">
    <reaction evidence="1">
        <text>N-acetyl-4-O-acetylneuraminate + H2O = N-acetylneuraminate + acetate + H(+)</text>
        <dbReference type="Rhea" id="RHEA:25564"/>
        <dbReference type="ChEBI" id="CHEBI:15377"/>
        <dbReference type="ChEBI" id="CHEBI:15378"/>
        <dbReference type="ChEBI" id="CHEBI:29006"/>
        <dbReference type="ChEBI" id="CHEBI:30089"/>
        <dbReference type="ChEBI" id="CHEBI:35418"/>
        <dbReference type="EC" id="3.1.1.53"/>
    </reaction>
</comment>
<comment type="subunit">
    <text evidence="1">Homotrimer of disulfide-linked HEF1-HEF2.</text>
</comment>
<comment type="subcellular location">
    <subcellularLocation>
        <location evidence="1">Virion membrane</location>
        <topology evidence="1">Single-pass type I membrane protein</topology>
    </subcellularLocation>
    <subcellularLocation>
        <location evidence="1">Host cell membrane</location>
        <topology evidence="1">Single-pass type I membrane protein</topology>
    </subcellularLocation>
</comment>
<comment type="PTM">
    <text evidence="1">In natural infection, inactive HEF is matured into HEF1 and HEF2 outside the cell by one or more trypsin-like, arginine-specific endoprotease.</text>
</comment>
<comment type="similarity">
    <text evidence="1">Belongs to the influenza viruses hemagglutinin family.</text>
</comment>
<keyword id="KW-1015">Disulfide bond</keyword>
<keyword id="KW-1170">Fusion of virus membrane with host endosomal membrane</keyword>
<keyword id="KW-1168">Fusion of virus membrane with host membrane</keyword>
<keyword id="KW-0325">Glycoprotein</keyword>
<keyword id="KW-0348">Hemagglutinin</keyword>
<keyword id="KW-1032">Host cell membrane</keyword>
<keyword id="KW-1043">Host membrane</keyword>
<keyword id="KW-0945">Host-virus interaction</keyword>
<keyword id="KW-0378">Hydrolase</keyword>
<keyword id="KW-0472">Membrane</keyword>
<keyword id="KW-0812">Transmembrane</keyword>
<keyword id="KW-1133">Transmembrane helix</keyword>
<keyword id="KW-1161">Viral attachment to host cell</keyword>
<keyword id="KW-0261">Viral envelope protein</keyword>
<keyword id="KW-1162">Viral penetration into host cytoplasm</keyword>
<keyword id="KW-0946">Virion</keyword>
<keyword id="KW-1164">Virus endocytosis by host</keyword>
<keyword id="KW-1160">Virus entry into host cell</keyword>
<evidence type="ECO:0000255" key="1">
    <source>
        <dbReference type="HAMAP-Rule" id="MF_04072"/>
    </source>
</evidence>
<sequence length="642" mass="70719">AEKIKICLQKQVNSSFSLHNGFGGNLYATEEKRMFELVKPKAGASVLNQSTWICFGDSRTDQSNSAFPRSADVSAKTAEKFRSLSGGSLMLSMFGPPGKVDYLYQGCGKHKVFYEGVNWSPHTAIDCYRKNWTDIKLNFQKSIYELASQSHCMSLVNALDKTIPLQATKGVAKNCNNSFLKNPALYTQEVKPLEQICGEENLAFFTLPTQFGTYECKLHLVASCYFIYDSKEVYNKRGCGNYFQVIYDSSGKVVGGLDNRVSPYTGNSGDTPTMQCDMLQLKPGRYSVRSSPRFLLMPERSYCFDMKEKGLVTAVQSIWGKGRKSDYAVDQACLSTPGCMLIQKQKPYIGEADDHHGDQEMRELLSGLDYEARCISQSGWVNETSPFTEEYLLPPKFGRCPLAAKEESIPKIPDGLLIPTSGTDTTVTKPKSRIFGIDDLIIGLLFVAIVEAGIGGYLLGSRKESGGGVTKESAEKGFEKIGNDIQILRSSTNIAIEKLNDRISHDEQAIRDLTLEIENARSEALLGELGIIRALLVGNISIGLQESLWELASEITNRAGDLAVEVSPGCWIIDNNICDQSCQNFIFKFNETAPVPTIPPLDTKIDLQSDPFYWGSSLGLAITTPISLAALVISGIAICRTK</sequence>
<organism>
    <name type="scientific">Influenza C virus (strain C/Pig/Beijing/115/1981)</name>
    <dbReference type="NCBI Taxonomy" id="203231"/>
    <lineage>
        <taxon>Viruses</taxon>
        <taxon>Riboviria</taxon>
        <taxon>Orthornavirae</taxon>
        <taxon>Negarnaviricota</taxon>
        <taxon>Polyploviricotina</taxon>
        <taxon>Insthoviricetes</taxon>
        <taxon>Articulavirales</taxon>
        <taxon>Orthomyxoviridae</taxon>
        <taxon>Gammainfluenzavirus</taxon>
        <taxon>Gammainfluenzavirus influenzae</taxon>
        <taxon>Influenza C virus</taxon>
    </lineage>
</organism>
<feature type="chain" id="PRO_0000440765" description="Hemagglutinin-esterase-fusion glycoprotein chain 1" evidence="1">
    <location>
        <begin position="1"/>
        <end position="433"/>
    </location>
</feature>
<feature type="chain" id="PRO_0000039165" description="Hemagglutinin-esterase-fusion glycoprotein chain 2" evidence="1">
    <location>
        <begin position="434"/>
        <end position="642"/>
    </location>
</feature>
<feature type="topological domain" description="Extracellular" evidence="1">
    <location>
        <begin position="1"/>
        <end position="617"/>
    </location>
</feature>
<feature type="transmembrane region" description="Helical" evidence="1">
    <location>
        <begin position="618"/>
        <end position="638"/>
    </location>
</feature>
<feature type="topological domain" description="Cytoplasmic" evidence="1">
    <location>
        <begin position="639"/>
        <end position="642"/>
    </location>
</feature>
<feature type="region of interest" description="N-acetyl-9-O-acetylneuraminic acid binding" evidence="1">
    <location>
        <begin position="83"/>
        <end position="297"/>
    </location>
</feature>
<feature type="region of interest" description="Esterase domain-2" evidence="1">
    <location>
        <begin position="297"/>
        <end position="351"/>
    </location>
</feature>
<feature type="region of interest" description="Fusion domain-2" evidence="1">
    <location>
        <begin position="352"/>
        <end position="637"/>
    </location>
</feature>
<feature type="active site" description="Charge relay system" evidence="1">
    <location>
        <position position="353"/>
    </location>
</feature>
<feature type="active site" description="Charge relay system" evidence="1">
    <location>
        <position position="356"/>
    </location>
</feature>
<feature type="glycosylation site" description="N-linked (GlcNAc...) asparagine; by host" evidence="1">
    <location>
        <position position="13"/>
    </location>
</feature>
<feature type="glycosylation site" description="N-linked (GlcNAc...) asparagine; by host" evidence="1">
    <location>
        <position position="48"/>
    </location>
</feature>
<feature type="glycosylation site" description="N-linked (GlcNAc...) asparagine; by host" evidence="1">
    <location>
        <position position="131"/>
    </location>
</feature>
<feature type="glycosylation site" description="N-linked (GlcNAc...) asparagine; by host" evidence="1">
    <location>
        <position position="176"/>
    </location>
</feature>
<feature type="glycosylation site" description="N-linked (GlcNAc...) asparagine; by host" evidence="1">
    <location>
        <position position="382"/>
    </location>
</feature>
<feature type="glycosylation site" description="N-linked (GlcNAc...) asparagine; by host" evidence="1">
    <location>
        <position position="539"/>
    </location>
</feature>
<feature type="glycosylation site" description="N-linked (GlcNAc...) asparagine; by host" evidence="1">
    <location>
        <position position="590"/>
    </location>
</feature>
<feature type="disulfide bond" evidence="1">
    <location>
        <begin position="197"/>
        <end position="239"/>
    </location>
</feature>
<feature type="disulfide bond" evidence="1">
    <location>
        <begin position="216"/>
        <end position="303"/>
    </location>
</feature>
<feature type="disulfide bond" evidence="1">
    <location>
        <begin position="224"/>
        <end position="276"/>
    </location>
</feature>
<feature type="non-terminal residue">
    <location>
        <position position="1"/>
    </location>
</feature>
<protein>
    <recommendedName>
        <fullName evidence="1">Hemagglutinin-esterase-fusion glycoprotein</fullName>
        <shortName evidence="1">HEF</shortName>
        <ecNumber evidence="1">3.1.1.53</ecNumber>
    </recommendedName>
    <component>
        <recommendedName>
            <fullName evidence="1">Hemagglutinin-esterase-fusion glycoprotein chain 1</fullName>
            <shortName evidence="1">HEF1</shortName>
        </recommendedName>
    </component>
    <component>
        <recommendedName>
            <fullName evidence="1">Hemagglutinin-esterase-fusion glycoprotein chain 2</fullName>
            <shortName evidence="1">HEF2</shortName>
        </recommendedName>
    </component>
</protein>
<dbReference type="EC" id="3.1.1.53" evidence="1"/>
<dbReference type="EMBL" id="M11644">
    <property type="protein sequence ID" value="AAA43793.1"/>
    <property type="molecule type" value="Genomic_RNA"/>
</dbReference>
<dbReference type="SMR" id="P07967"/>
<dbReference type="GlyCosmos" id="P07967">
    <property type="glycosylation" value="7 sites, No reported glycans"/>
</dbReference>
<dbReference type="GO" id="GO:0020002">
    <property type="term" value="C:host cell plasma membrane"/>
    <property type="evidence" value="ECO:0007669"/>
    <property type="project" value="UniProtKB-SubCell"/>
</dbReference>
<dbReference type="GO" id="GO:0016020">
    <property type="term" value="C:membrane"/>
    <property type="evidence" value="ECO:0007669"/>
    <property type="project" value="UniProtKB-KW"/>
</dbReference>
<dbReference type="GO" id="GO:0019031">
    <property type="term" value="C:viral envelope"/>
    <property type="evidence" value="ECO:0007669"/>
    <property type="project" value="UniProtKB-KW"/>
</dbReference>
<dbReference type="GO" id="GO:0055036">
    <property type="term" value="C:virion membrane"/>
    <property type="evidence" value="ECO:0007669"/>
    <property type="project" value="UniProtKB-SubCell"/>
</dbReference>
<dbReference type="GO" id="GO:0046789">
    <property type="term" value="F:host cell surface receptor binding"/>
    <property type="evidence" value="ECO:0007669"/>
    <property type="project" value="InterPro"/>
</dbReference>
<dbReference type="GO" id="GO:0106331">
    <property type="term" value="F:sialate 4-O-acetylesterase activity"/>
    <property type="evidence" value="ECO:0007669"/>
    <property type="project" value="RHEA"/>
</dbReference>
<dbReference type="GO" id="GO:0106330">
    <property type="term" value="F:sialate 9-O-acetylesterase activity"/>
    <property type="evidence" value="ECO:0007669"/>
    <property type="project" value="RHEA"/>
</dbReference>
<dbReference type="GO" id="GO:0075509">
    <property type="term" value="P:endocytosis involved in viral entry into host cell"/>
    <property type="evidence" value="ECO:0007669"/>
    <property type="project" value="UniProtKB-KW"/>
</dbReference>
<dbReference type="GO" id="GO:0039654">
    <property type="term" value="P:fusion of virus membrane with host endosome membrane"/>
    <property type="evidence" value="ECO:0007669"/>
    <property type="project" value="UniProtKB-KW"/>
</dbReference>
<dbReference type="GO" id="GO:0019064">
    <property type="term" value="P:fusion of virus membrane with host plasma membrane"/>
    <property type="evidence" value="ECO:0007669"/>
    <property type="project" value="InterPro"/>
</dbReference>
<dbReference type="GO" id="GO:0019062">
    <property type="term" value="P:virion attachment to host cell"/>
    <property type="evidence" value="ECO:0007669"/>
    <property type="project" value="UniProtKB-KW"/>
</dbReference>
<dbReference type="Gene3D" id="2.20.70.20">
    <property type="match status" value="2"/>
</dbReference>
<dbReference type="Gene3D" id="3.90.20.10">
    <property type="match status" value="1"/>
</dbReference>
<dbReference type="HAMAP" id="MF_04072">
    <property type="entry name" value="INFV_HEMA"/>
    <property type="match status" value="1"/>
</dbReference>
<dbReference type="InterPro" id="IPR008980">
    <property type="entry name" value="Capsid_hemagglutn"/>
</dbReference>
<dbReference type="InterPro" id="IPR007142">
    <property type="entry name" value="Hemagglutn-estrase_core"/>
</dbReference>
<dbReference type="InterPro" id="IPR003860">
    <property type="entry name" value="Hemagglutn-estrase_hemagglutn"/>
</dbReference>
<dbReference type="InterPro" id="IPR001364">
    <property type="entry name" value="Hemagglutn_influenz_A/B"/>
</dbReference>
<dbReference type="InterPro" id="IPR014831">
    <property type="entry name" value="Hemagglutn_stalk_influenz-C"/>
</dbReference>
<dbReference type="Pfam" id="PF03996">
    <property type="entry name" value="Hema_esterase"/>
    <property type="match status" value="1"/>
</dbReference>
<dbReference type="Pfam" id="PF02710">
    <property type="entry name" value="Hema_HEFG"/>
    <property type="match status" value="1"/>
</dbReference>
<dbReference type="Pfam" id="PF08720">
    <property type="entry name" value="Hema_stalk"/>
    <property type="match status" value="1"/>
</dbReference>
<dbReference type="SUPFAM" id="SSF58064">
    <property type="entry name" value="Influenza hemagglutinin (stalk)"/>
    <property type="match status" value="1"/>
</dbReference>
<dbReference type="SUPFAM" id="SSF52266">
    <property type="entry name" value="SGNH hydrolase"/>
    <property type="match status" value="1"/>
</dbReference>
<dbReference type="SUPFAM" id="SSF49818">
    <property type="entry name" value="Viral protein domain"/>
    <property type="match status" value="1"/>
</dbReference>
<reference key="1">
    <citation type="journal article" date="1985" name="Virology">
        <title>Noncumulative sequence changes in the hemagglutinin genes of influenza C virus isolates.</title>
        <authorList>
            <person name="Buonagurio D.A."/>
            <person name="Nakada S."/>
            <person name="Desselberger U."/>
            <person name="Krystal M."/>
            <person name="Palese P."/>
        </authorList>
    </citation>
    <scope>NUCLEOTIDE SEQUENCE [GENOMIC RNA]</scope>
</reference>
<accession>P07967</accession>
<organismHost>
    <name type="scientific">Homo sapiens</name>
    <name type="common">Human</name>
    <dbReference type="NCBI Taxonomy" id="9606"/>
</organismHost>
<organismHost>
    <name type="scientific">Sus scrofa</name>
    <name type="common">Pig</name>
    <dbReference type="NCBI Taxonomy" id="9823"/>
</organismHost>
<gene>
    <name evidence="1" type="primary">HE</name>
</gene>
<name>HEMA_INCP2</name>
<proteinExistence type="inferred from homology"/>